<gene>
    <name evidence="3" type="primary">ROSY1</name>
    <name evidence="5" type="ordered locus">At2g16005</name>
</gene>
<sequence length="160" mass="17228">MAISHTQLLLLLLVSLFFSPALCGPKFQTCDTGKEYPLKVSSVEISPDPVKRSGNGEITITGVTNKEISDGVTVNLKLAVGMFPVSTKSYSLCDITACPVAPGPIVLTLPNIFTPREKRTAIGYTIIISITDKPLKESMMCILFVVKLTGHASMINQVTE</sequence>
<keyword id="KW-0963">Cytoplasm</keyword>
<keyword id="KW-1185">Reference proteome</keyword>
<keyword id="KW-0732">Signal</keyword>
<keyword id="KW-0346">Stress response</keyword>
<organism>
    <name type="scientific">Arabidopsis thaliana</name>
    <name type="common">Mouse-ear cress</name>
    <dbReference type="NCBI Taxonomy" id="3702"/>
    <lineage>
        <taxon>Eukaryota</taxon>
        <taxon>Viridiplantae</taxon>
        <taxon>Streptophyta</taxon>
        <taxon>Embryophyta</taxon>
        <taxon>Tracheophyta</taxon>
        <taxon>Spermatophyta</taxon>
        <taxon>Magnoliopsida</taxon>
        <taxon>eudicotyledons</taxon>
        <taxon>Gunneridae</taxon>
        <taxon>Pentapetalae</taxon>
        <taxon>rosids</taxon>
        <taxon>malvids</taxon>
        <taxon>Brassicales</taxon>
        <taxon>Brassicaceae</taxon>
        <taxon>Camelineae</taxon>
        <taxon>Arabidopsis</taxon>
    </lineage>
</organism>
<feature type="signal peptide" evidence="1">
    <location>
        <begin position="1"/>
        <end position="23"/>
    </location>
</feature>
<feature type="chain" id="PRO_5010510524" description="MD-2-related lipid-recognition protein ROSY1">
    <location>
        <begin position="24"/>
        <end position="160"/>
    </location>
</feature>
<feature type="sequence conflict" description="In Ref. 4; AAM67216." evidence="4" ref="4">
    <original>E</original>
    <variation>K</variation>
    <location>
        <position position="137"/>
    </location>
</feature>
<proteinExistence type="evidence at protein level"/>
<comment type="function">
    <text evidence="2">Involved in the regulation of gravitropic response and basipetal auxin transport in roots. Involved in salt stress tolerance. May facilitate membrane trafficking and asymmetric cell elongation via SYT1. Binds stigmasterol and dipalmitoyl phosphoethanolamine (DPPE) in vitro.</text>
</comment>
<comment type="subunit">
    <text evidence="2">Interacts with SYT1.</text>
</comment>
<comment type="subcellular location">
    <subcellularLocation>
        <location evidence="2">Cytoplasm</location>
    </subcellularLocation>
</comment>
<comment type="tissue specificity">
    <text evidence="2">Expressed exclusively in roots, in epidermis and cortex cells of the root elongation zone, and lateral root cap cells at the root tip.</text>
</comment>
<comment type="induction">
    <text evidence="2">Induced by gravity stimulation.</text>
</comment>
<comment type="disruption phenotype">
    <text evidence="2">No visible phenotype under normal growth conditions, but mutant plants exhibit decreased root basipetal auxin transport, faster root gravitropic response and increase in salt stress tolerance.</text>
</comment>
<reference key="1">
    <citation type="journal article" date="1999" name="Nature">
        <title>Sequence and analysis of chromosome 2 of the plant Arabidopsis thaliana.</title>
        <authorList>
            <person name="Lin X."/>
            <person name="Kaul S."/>
            <person name="Rounsley S.D."/>
            <person name="Shea T.P."/>
            <person name="Benito M.-I."/>
            <person name="Town C.D."/>
            <person name="Fujii C.Y."/>
            <person name="Mason T.M."/>
            <person name="Bowman C.L."/>
            <person name="Barnstead M.E."/>
            <person name="Feldblyum T.V."/>
            <person name="Buell C.R."/>
            <person name="Ketchum K.A."/>
            <person name="Lee J.J."/>
            <person name="Ronning C.M."/>
            <person name="Koo H.L."/>
            <person name="Moffat K.S."/>
            <person name="Cronin L.A."/>
            <person name="Shen M."/>
            <person name="Pai G."/>
            <person name="Van Aken S."/>
            <person name="Umayam L."/>
            <person name="Tallon L.J."/>
            <person name="Gill J.E."/>
            <person name="Adams M.D."/>
            <person name="Carrera A.J."/>
            <person name="Creasy T.H."/>
            <person name="Goodman H.M."/>
            <person name="Somerville C.R."/>
            <person name="Copenhaver G.P."/>
            <person name="Preuss D."/>
            <person name="Nierman W.C."/>
            <person name="White O."/>
            <person name="Eisen J.A."/>
            <person name="Salzberg S.L."/>
            <person name="Fraser C.M."/>
            <person name="Venter J.C."/>
        </authorList>
    </citation>
    <scope>NUCLEOTIDE SEQUENCE [LARGE SCALE GENOMIC DNA]</scope>
    <source>
        <strain>cv. Columbia</strain>
    </source>
</reference>
<reference key="2">
    <citation type="journal article" date="2017" name="Plant J.">
        <title>Araport11: a complete reannotation of the Arabidopsis thaliana reference genome.</title>
        <authorList>
            <person name="Cheng C.Y."/>
            <person name="Krishnakumar V."/>
            <person name="Chan A.P."/>
            <person name="Thibaud-Nissen F."/>
            <person name="Schobel S."/>
            <person name="Town C.D."/>
        </authorList>
    </citation>
    <scope>GENOME REANNOTATION</scope>
    <source>
        <strain>cv. Columbia</strain>
    </source>
</reference>
<reference key="3">
    <citation type="journal article" date="2003" name="Science">
        <title>Empirical analysis of transcriptional activity in the Arabidopsis genome.</title>
        <authorList>
            <person name="Yamada K."/>
            <person name="Lim J."/>
            <person name="Dale J.M."/>
            <person name="Chen H."/>
            <person name="Shinn P."/>
            <person name="Palm C.J."/>
            <person name="Southwick A.M."/>
            <person name="Wu H.C."/>
            <person name="Kim C.J."/>
            <person name="Nguyen M."/>
            <person name="Pham P.K."/>
            <person name="Cheuk R.F."/>
            <person name="Karlin-Newmann G."/>
            <person name="Liu S.X."/>
            <person name="Lam B."/>
            <person name="Sakano H."/>
            <person name="Wu T."/>
            <person name="Yu G."/>
            <person name="Miranda M."/>
            <person name="Quach H.L."/>
            <person name="Tripp M."/>
            <person name="Chang C.H."/>
            <person name="Lee J.M."/>
            <person name="Toriumi M.J."/>
            <person name="Chan M.M."/>
            <person name="Tang C.C."/>
            <person name="Onodera C.S."/>
            <person name="Deng J.M."/>
            <person name="Akiyama K."/>
            <person name="Ansari Y."/>
            <person name="Arakawa T."/>
            <person name="Banh J."/>
            <person name="Banno F."/>
            <person name="Bowser L."/>
            <person name="Brooks S.Y."/>
            <person name="Carninci P."/>
            <person name="Chao Q."/>
            <person name="Choy N."/>
            <person name="Enju A."/>
            <person name="Goldsmith A.D."/>
            <person name="Gurjal M."/>
            <person name="Hansen N.F."/>
            <person name="Hayashizaki Y."/>
            <person name="Johnson-Hopson C."/>
            <person name="Hsuan V.W."/>
            <person name="Iida K."/>
            <person name="Karnes M."/>
            <person name="Khan S."/>
            <person name="Koesema E."/>
            <person name="Ishida J."/>
            <person name="Jiang P.X."/>
            <person name="Jones T."/>
            <person name="Kawai J."/>
            <person name="Kamiya A."/>
            <person name="Meyers C."/>
            <person name="Nakajima M."/>
            <person name="Narusaka M."/>
            <person name="Seki M."/>
            <person name="Sakurai T."/>
            <person name="Satou M."/>
            <person name="Tamse R."/>
            <person name="Vaysberg M."/>
            <person name="Wallender E.K."/>
            <person name="Wong C."/>
            <person name="Yamamura Y."/>
            <person name="Yuan S."/>
            <person name="Shinozaki K."/>
            <person name="Davis R.W."/>
            <person name="Theologis A."/>
            <person name="Ecker J.R."/>
        </authorList>
    </citation>
    <scope>NUCLEOTIDE SEQUENCE [LARGE SCALE MRNA]</scope>
    <source>
        <strain>cv. Columbia</strain>
    </source>
</reference>
<reference key="4">
    <citation type="submission" date="2002-03" db="EMBL/GenBank/DDBJ databases">
        <title>Full-length cDNA from Arabidopsis thaliana.</title>
        <authorList>
            <person name="Brover V.V."/>
            <person name="Troukhan M.E."/>
            <person name="Alexandrov N.A."/>
            <person name="Lu Y.-P."/>
            <person name="Flavell R.B."/>
            <person name="Feldmann K.A."/>
        </authorList>
    </citation>
    <scope>NUCLEOTIDE SEQUENCE [LARGE SCALE MRNA]</scope>
    <source>
        <strain>cv. Columbia</strain>
    </source>
</reference>
<reference key="5">
    <citation type="journal article" date="2016" name="J. Plant Physiol.">
        <title>ROSY1, a novel regulator of gravitropic response is a stigmasterol binding protein.</title>
        <authorList>
            <person name="Dalal J."/>
            <person name="Lewis D.R."/>
            <person name="Tietz O."/>
            <person name="Brown E.M."/>
            <person name="Brown C.S."/>
            <person name="Palme K."/>
            <person name="Muday G.K."/>
            <person name="Sederoff H.W."/>
        </authorList>
    </citation>
    <scope>FUNCTION</scope>
    <scope>INTERACTION WITH SYT1</scope>
    <scope>SUBCELLULAR LOCATION</scope>
    <scope>TISSUE SPECIFICITY</scope>
    <scope>INDUCTION BY GRAVITY STIMULATION</scope>
    <scope>DISRUPTION PHENOTYPE</scope>
</reference>
<accession>Q9AST8</accession>
<accession>Q8L8M3</accession>
<dbReference type="EMBL" id="AC007134">
    <property type="protein sequence ID" value="AAM15402.1"/>
    <property type="molecule type" value="Genomic_DNA"/>
</dbReference>
<dbReference type="EMBL" id="CP002685">
    <property type="protein sequence ID" value="AEC06454.1"/>
    <property type="molecule type" value="Genomic_DNA"/>
</dbReference>
<dbReference type="EMBL" id="AF361840">
    <property type="protein sequence ID" value="AAK32852.1"/>
    <property type="molecule type" value="mRNA"/>
</dbReference>
<dbReference type="EMBL" id="AY066048">
    <property type="protein sequence ID" value="AAL47415.1"/>
    <property type="molecule type" value="mRNA"/>
</dbReference>
<dbReference type="EMBL" id="AY088910">
    <property type="protein sequence ID" value="AAM67216.1"/>
    <property type="molecule type" value="mRNA"/>
</dbReference>
<dbReference type="RefSeq" id="NP_565385.1">
    <property type="nucleotide sequence ID" value="NM_127159.3"/>
</dbReference>
<dbReference type="SMR" id="Q9AST8"/>
<dbReference type="FunCoup" id="Q9AST8">
    <property type="interactions" value="7"/>
</dbReference>
<dbReference type="STRING" id="3702.Q9AST8"/>
<dbReference type="PaxDb" id="3702-AT2G16005.1"/>
<dbReference type="ProteomicsDB" id="228218"/>
<dbReference type="EnsemblPlants" id="AT2G16005.1">
    <property type="protein sequence ID" value="AT2G16005.1"/>
    <property type="gene ID" value="AT2G16005"/>
</dbReference>
<dbReference type="GeneID" id="816096"/>
<dbReference type="Gramene" id="AT2G16005.1">
    <property type="protein sequence ID" value="AT2G16005.1"/>
    <property type="gene ID" value="AT2G16005"/>
</dbReference>
<dbReference type="KEGG" id="ath:AT2G16005"/>
<dbReference type="Araport" id="AT2G16005"/>
<dbReference type="TAIR" id="AT2G16005">
    <property type="gene designation" value="ROSY1"/>
</dbReference>
<dbReference type="eggNOG" id="KOG4680">
    <property type="taxonomic scope" value="Eukaryota"/>
</dbReference>
<dbReference type="HOGENOM" id="CLU_140610_0_0_1"/>
<dbReference type="InParanoid" id="Q9AST8"/>
<dbReference type="OMA" id="FECETRW"/>
<dbReference type="OrthoDB" id="6409159at2759"/>
<dbReference type="PhylomeDB" id="Q9AST8"/>
<dbReference type="PRO" id="PR:Q9AST8"/>
<dbReference type="Proteomes" id="UP000006548">
    <property type="component" value="Chromosome 2"/>
</dbReference>
<dbReference type="ExpressionAtlas" id="Q9AST8">
    <property type="expression patterns" value="baseline and differential"/>
</dbReference>
<dbReference type="GO" id="GO:0005737">
    <property type="term" value="C:cytoplasm"/>
    <property type="evidence" value="ECO:0000314"/>
    <property type="project" value="TAIR"/>
</dbReference>
<dbReference type="GO" id="GO:0008429">
    <property type="term" value="F:phosphatidylethanolamine binding"/>
    <property type="evidence" value="ECO:0000314"/>
    <property type="project" value="TAIR"/>
</dbReference>
<dbReference type="GO" id="GO:0032934">
    <property type="term" value="F:sterol binding"/>
    <property type="evidence" value="ECO:0000314"/>
    <property type="project" value="TAIR"/>
</dbReference>
<dbReference type="GO" id="GO:0032366">
    <property type="term" value="P:intracellular sterol transport"/>
    <property type="evidence" value="ECO:0007669"/>
    <property type="project" value="InterPro"/>
</dbReference>
<dbReference type="GO" id="GO:0009958">
    <property type="term" value="P:positive gravitropism"/>
    <property type="evidence" value="ECO:0000315"/>
    <property type="project" value="TAIR"/>
</dbReference>
<dbReference type="GO" id="GO:0009651">
    <property type="term" value="P:response to salt stress"/>
    <property type="evidence" value="ECO:0000315"/>
    <property type="project" value="TAIR"/>
</dbReference>
<dbReference type="CDD" id="cd00917">
    <property type="entry name" value="PG-PI_TP"/>
    <property type="match status" value="1"/>
</dbReference>
<dbReference type="Gene3D" id="2.70.220.10">
    <property type="entry name" value="Ganglioside GM2 activator"/>
    <property type="match status" value="1"/>
</dbReference>
<dbReference type="InterPro" id="IPR036846">
    <property type="entry name" value="GM2-AP_sf"/>
</dbReference>
<dbReference type="InterPro" id="IPR014756">
    <property type="entry name" value="Ig_E-set"/>
</dbReference>
<dbReference type="InterPro" id="IPR003172">
    <property type="entry name" value="ML_dom"/>
</dbReference>
<dbReference type="InterPro" id="IPR033917">
    <property type="entry name" value="ML_PG-PI_TP"/>
</dbReference>
<dbReference type="InterPro" id="IPR039670">
    <property type="entry name" value="NPC2-like"/>
</dbReference>
<dbReference type="PANTHER" id="PTHR11306:SF35">
    <property type="entry name" value="MD-2-RELATED LIPID-RECOGNITION PROTEIN ROSY1"/>
    <property type="match status" value="1"/>
</dbReference>
<dbReference type="PANTHER" id="PTHR11306">
    <property type="entry name" value="NIEMANN PICK TYPE C2 PROTEIN NPC2-RELATED"/>
    <property type="match status" value="1"/>
</dbReference>
<dbReference type="Pfam" id="PF02221">
    <property type="entry name" value="E1_DerP2_DerF2"/>
    <property type="match status" value="1"/>
</dbReference>
<dbReference type="SMART" id="SM00737">
    <property type="entry name" value="ML"/>
    <property type="match status" value="1"/>
</dbReference>
<dbReference type="SUPFAM" id="SSF81296">
    <property type="entry name" value="E set domains"/>
    <property type="match status" value="1"/>
</dbReference>
<protein>
    <recommendedName>
        <fullName evidence="4">MD-2-related lipid-recognition protein ROSY1</fullName>
    </recommendedName>
    <alternativeName>
        <fullName evidence="3">Protein INTERACTOR OF SYNAPTOTAGMIN 1</fullName>
    </alternativeName>
</protein>
<evidence type="ECO:0000255" key="1"/>
<evidence type="ECO:0000269" key="2">
    <source>
    </source>
</evidence>
<evidence type="ECO:0000303" key="3">
    <source>
    </source>
</evidence>
<evidence type="ECO:0000305" key="4"/>
<evidence type="ECO:0000312" key="5">
    <source>
        <dbReference type="Araport" id="AT2G16005"/>
    </source>
</evidence>
<name>ROSY1_ARATH</name>